<keyword id="KW-0997">Cell inner membrane</keyword>
<keyword id="KW-1003">Cell membrane</keyword>
<keyword id="KW-0472">Membrane</keyword>
<evidence type="ECO:0000255" key="1">
    <source>
        <dbReference type="HAMAP-Rule" id="MF_00386"/>
    </source>
</evidence>
<protein>
    <recommendedName>
        <fullName evidence="1">Putative membrane protein insertion efficiency factor</fullName>
    </recommendedName>
</protein>
<name>YIDD_PROMP</name>
<organism>
    <name type="scientific">Prochlorococcus marinus subsp. pastoris (strain CCMP1986 / NIES-2087 / MED4)</name>
    <dbReference type="NCBI Taxonomy" id="59919"/>
    <lineage>
        <taxon>Bacteria</taxon>
        <taxon>Bacillati</taxon>
        <taxon>Cyanobacteriota</taxon>
        <taxon>Cyanophyceae</taxon>
        <taxon>Synechococcales</taxon>
        <taxon>Prochlorococcaceae</taxon>
        <taxon>Prochlorococcus</taxon>
    </lineage>
</organism>
<sequence>MFKTINKSITSILLFMISCYQKWFSPFFGPRCRFIPSCSSYGYEAITRHGPWKGGWLTLRRLSRCHPLTPCGCDPVPD</sequence>
<dbReference type="EMBL" id="BX548174">
    <property type="protein sequence ID" value="CAE18870.1"/>
    <property type="molecule type" value="Genomic_DNA"/>
</dbReference>
<dbReference type="STRING" id="59919.PMM0411"/>
<dbReference type="KEGG" id="pmm:PMM0411"/>
<dbReference type="eggNOG" id="COG0759">
    <property type="taxonomic scope" value="Bacteria"/>
</dbReference>
<dbReference type="HOGENOM" id="CLU_144811_6_0_3"/>
<dbReference type="OrthoDB" id="9801753at2"/>
<dbReference type="Proteomes" id="UP000001026">
    <property type="component" value="Chromosome"/>
</dbReference>
<dbReference type="GO" id="GO:0005886">
    <property type="term" value="C:plasma membrane"/>
    <property type="evidence" value="ECO:0007669"/>
    <property type="project" value="UniProtKB-SubCell"/>
</dbReference>
<dbReference type="HAMAP" id="MF_00386">
    <property type="entry name" value="UPF0161_YidD"/>
    <property type="match status" value="1"/>
</dbReference>
<dbReference type="InterPro" id="IPR002696">
    <property type="entry name" value="Membr_insert_effic_factor_YidD"/>
</dbReference>
<dbReference type="NCBIfam" id="TIGR00278">
    <property type="entry name" value="membrane protein insertion efficiency factor YidD"/>
    <property type="match status" value="1"/>
</dbReference>
<dbReference type="PANTHER" id="PTHR33383">
    <property type="entry name" value="MEMBRANE PROTEIN INSERTION EFFICIENCY FACTOR-RELATED"/>
    <property type="match status" value="1"/>
</dbReference>
<dbReference type="PANTHER" id="PTHR33383:SF1">
    <property type="entry name" value="MEMBRANE PROTEIN INSERTION EFFICIENCY FACTOR-RELATED"/>
    <property type="match status" value="1"/>
</dbReference>
<dbReference type="Pfam" id="PF01809">
    <property type="entry name" value="YidD"/>
    <property type="match status" value="1"/>
</dbReference>
<dbReference type="SMART" id="SM01234">
    <property type="entry name" value="Haemolytic"/>
    <property type="match status" value="1"/>
</dbReference>
<proteinExistence type="inferred from homology"/>
<feature type="chain" id="PRO_0000171853" description="Putative membrane protein insertion efficiency factor">
    <location>
        <begin position="1"/>
        <end position="78"/>
    </location>
</feature>
<accession>Q7V2R0</accession>
<reference key="1">
    <citation type="journal article" date="2003" name="Nature">
        <title>Genome divergence in two Prochlorococcus ecotypes reflects oceanic niche differentiation.</title>
        <authorList>
            <person name="Rocap G."/>
            <person name="Larimer F.W."/>
            <person name="Lamerdin J.E."/>
            <person name="Malfatti S."/>
            <person name="Chain P."/>
            <person name="Ahlgren N.A."/>
            <person name="Arellano A."/>
            <person name="Coleman M."/>
            <person name="Hauser L."/>
            <person name="Hess W.R."/>
            <person name="Johnson Z.I."/>
            <person name="Land M.L."/>
            <person name="Lindell D."/>
            <person name="Post A.F."/>
            <person name="Regala W."/>
            <person name="Shah M."/>
            <person name="Shaw S.L."/>
            <person name="Steglich C."/>
            <person name="Sullivan M.B."/>
            <person name="Ting C.S."/>
            <person name="Tolonen A."/>
            <person name="Webb E.A."/>
            <person name="Zinser E.R."/>
            <person name="Chisholm S.W."/>
        </authorList>
    </citation>
    <scope>NUCLEOTIDE SEQUENCE [LARGE SCALE GENOMIC DNA]</scope>
    <source>
        <strain>CCMP1986 / NIES-2087 / MED4</strain>
    </source>
</reference>
<gene>
    <name type="ordered locus">PMM0411</name>
</gene>
<comment type="function">
    <text evidence="1">Could be involved in insertion of integral membrane proteins into the membrane.</text>
</comment>
<comment type="subcellular location">
    <subcellularLocation>
        <location evidence="1">Cell inner membrane</location>
        <topology evidence="1">Peripheral membrane protein</topology>
        <orientation evidence="1">Cytoplasmic side</orientation>
    </subcellularLocation>
</comment>
<comment type="similarity">
    <text evidence="1">Belongs to the UPF0161 family.</text>
</comment>